<sequence>MVDNIIDTDNYYAIVYTYKTIGLSKLYEHYIPEKDLINIRFSDTQVSLLQTCNRVELYLYTKDRNKINDILSKLNETHGKDISSNAIVLRGKDAINHLYQVASGLDSLAIGEYEILGQIKEALTSCKKHSLCNEEIELLFNAAIKVGRKVRSLTNISKGKVGIYSIAIQKSLEVMGDLTDIKIAIVGAGEIGSKLAFMLKNNGARNLTIFNRNLDRALELSNKFGYNAELLDFQKVNEYDLVFIAINNSNPSQLRLDKPKLVIDLSVPPVVYKTSNVIYLDDLRVISDNIILNKREDIKKAEAIINEEIQKFESLLNNYNMNRLVSRFMSEIEWVREKEVDRAFNEILKNYADKDNIKEIIDKMTYSLIKKVFSPILEDLRKDPNNKKQIVEYLIEVFQNGQFSDTKTQKIEKQ</sequence>
<gene>
    <name evidence="1" type="primary">hemA</name>
    <name type="ordered locus">Saci_0777</name>
</gene>
<name>HEM1_SULAC</name>
<protein>
    <recommendedName>
        <fullName evidence="1">Glutamyl-tRNA reductase</fullName>
        <shortName evidence="1">GluTR</shortName>
        <ecNumber evidence="1">1.2.1.70</ecNumber>
    </recommendedName>
</protein>
<organism>
    <name type="scientific">Sulfolobus acidocaldarius (strain ATCC 33909 / DSM 639 / JCM 8929 / NBRC 15157 / NCIMB 11770)</name>
    <dbReference type="NCBI Taxonomy" id="330779"/>
    <lineage>
        <taxon>Archaea</taxon>
        <taxon>Thermoproteota</taxon>
        <taxon>Thermoprotei</taxon>
        <taxon>Sulfolobales</taxon>
        <taxon>Sulfolobaceae</taxon>
        <taxon>Sulfolobus</taxon>
    </lineage>
</organism>
<reference key="1">
    <citation type="journal article" date="2005" name="J. Bacteriol.">
        <title>The genome of Sulfolobus acidocaldarius, a model organism of the Crenarchaeota.</title>
        <authorList>
            <person name="Chen L."/>
            <person name="Bruegger K."/>
            <person name="Skovgaard M."/>
            <person name="Redder P."/>
            <person name="She Q."/>
            <person name="Torarinsson E."/>
            <person name="Greve B."/>
            <person name="Awayez M."/>
            <person name="Zibat A."/>
            <person name="Klenk H.-P."/>
            <person name="Garrett R.A."/>
        </authorList>
    </citation>
    <scope>NUCLEOTIDE SEQUENCE [LARGE SCALE GENOMIC DNA]</scope>
    <source>
        <strain>ATCC 33909 / DSM 639 / JCM 8929 / NBRC 15157 / NCIMB 11770</strain>
    </source>
</reference>
<proteinExistence type="inferred from homology"/>
<comment type="function">
    <text evidence="1">Catalyzes the NADPH-dependent reduction of glutamyl-tRNA(Glu) to glutamate 1-semialdehyde (GSA).</text>
</comment>
<comment type="catalytic activity">
    <reaction evidence="1">
        <text>(S)-4-amino-5-oxopentanoate + tRNA(Glu) + NADP(+) = L-glutamyl-tRNA(Glu) + NADPH + H(+)</text>
        <dbReference type="Rhea" id="RHEA:12344"/>
        <dbReference type="Rhea" id="RHEA-COMP:9663"/>
        <dbReference type="Rhea" id="RHEA-COMP:9680"/>
        <dbReference type="ChEBI" id="CHEBI:15378"/>
        <dbReference type="ChEBI" id="CHEBI:57501"/>
        <dbReference type="ChEBI" id="CHEBI:57783"/>
        <dbReference type="ChEBI" id="CHEBI:58349"/>
        <dbReference type="ChEBI" id="CHEBI:78442"/>
        <dbReference type="ChEBI" id="CHEBI:78520"/>
        <dbReference type="EC" id="1.2.1.70"/>
    </reaction>
</comment>
<comment type="pathway">
    <text evidence="1">Porphyrin-containing compound metabolism; protoporphyrin-IX biosynthesis; 5-aminolevulinate from L-glutamyl-tRNA(Glu): step 1/2.</text>
</comment>
<comment type="subunit">
    <text evidence="1">Homodimer.</text>
</comment>
<comment type="domain">
    <text evidence="1">Possesses an unusual extended V-shaped dimeric structure with each monomer consisting of three distinct domains arranged along a curved 'spinal' alpha-helix. The N-terminal catalytic domain specifically recognizes the glutamate moiety of the substrate. The second domain is the NADPH-binding domain, and the third C-terminal domain is responsible for dimerization.</text>
</comment>
<comment type="miscellaneous">
    <text evidence="1">During catalysis, the active site Cys acts as a nucleophile attacking the alpha-carbonyl group of tRNA-bound glutamate with the formation of a thioester intermediate between enzyme and glutamate, and the concomitant release of tRNA(Glu). The thioester intermediate is finally reduced by direct hydride transfer from NADPH, to form the product GSA.</text>
</comment>
<comment type="similarity">
    <text evidence="1">Belongs to the glutamyl-tRNA reductase family.</text>
</comment>
<keyword id="KW-0521">NADP</keyword>
<keyword id="KW-0560">Oxidoreductase</keyword>
<keyword id="KW-0627">Porphyrin biosynthesis</keyword>
<keyword id="KW-1185">Reference proteome</keyword>
<dbReference type="EC" id="1.2.1.70" evidence="1"/>
<dbReference type="EMBL" id="CP000077">
    <property type="protein sequence ID" value="AAY80150.1"/>
    <property type="molecule type" value="Genomic_DNA"/>
</dbReference>
<dbReference type="RefSeq" id="WP_011277652.1">
    <property type="nucleotide sequence ID" value="NC_007181.1"/>
</dbReference>
<dbReference type="SMR" id="Q4JAM9"/>
<dbReference type="STRING" id="330779.Saci_0777"/>
<dbReference type="GeneID" id="14551293"/>
<dbReference type="KEGG" id="sai:Saci_0777"/>
<dbReference type="PATRIC" id="fig|330779.12.peg.743"/>
<dbReference type="eggNOG" id="arCOG01036">
    <property type="taxonomic scope" value="Archaea"/>
</dbReference>
<dbReference type="HOGENOM" id="CLU_035113_2_2_2"/>
<dbReference type="UniPathway" id="UPA00251">
    <property type="reaction ID" value="UER00316"/>
</dbReference>
<dbReference type="Proteomes" id="UP000001018">
    <property type="component" value="Chromosome"/>
</dbReference>
<dbReference type="GO" id="GO:0008883">
    <property type="term" value="F:glutamyl-tRNA reductase activity"/>
    <property type="evidence" value="ECO:0007669"/>
    <property type="project" value="UniProtKB-UniRule"/>
</dbReference>
<dbReference type="GO" id="GO:0050661">
    <property type="term" value="F:NADP binding"/>
    <property type="evidence" value="ECO:0007669"/>
    <property type="project" value="InterPro"/>
</dbReference>
<dbReference type="GO" id="GO:0019353">
    <property type="term" value="P:protoporphyrinogen IX biosynthetic process from glutamate"/>
    <property type="evidence" value="ECO:0007669"/>
    <property type="project" value="TreeGrafter"/>
</dbReference>
<dbReference type="Gene3D" id="3.30.460.30">
    <property type="entry name" value="Glutamyl-tRNA reductase, N-terminal domain"/>
    <property type="match status" value="1"/>
</dbReference>
<dbReference type="Gene3D" id="3.40.50.720">
    <property type="entry name" value="NAD(P)-binding Rossmann-like Domain"/>
    <property type="match status" value="1"/>
</dbReference>
<dbReference type="HAMAP" id="MF_00087">
    <property type="entry name" value="Glu_tRNA_reductase"/>
    <property type="match status" value="1"/>
</dbReference>
<dbReference type="InterPro" id="IPR000343">
    <property type="entry name" value="4pyrrol_synth_GluRdtase"/>
</dbReference>
<dbReference type="InterPro" id="IPR015896">
    <property type="entry name" value="4pyrrol_synth_GluRdtase_dimer"/>
</dbReference>
<dbReference type="InterPro" id="IPR015895">
    <property type="entry name" value="4pyrrol_synth_GluRdtase_N"/>
</dbReference>
<dbReference type="InterPro" id="IPR018214">
    <property type="entry name" value="GluRdtase_CS"/>
</dbReference>
<dbReference type="InterPro" id="IPR036453">
    <property type="entry name" value="GluRdtase_dimer_dom_sf"/>
</dbReference>
<dbReference type="InterPro" id="IPR036343">
    <property type="entry name" value="GluRdtase_N_sf"/>
</dbReference>
<dbReference type="InterPro" id="IPR036291">
    <property type="entry name" value="NAD(P)-bd_dom_sf"/>
</dbReference>
<dbReference type="InterPro" id="IPR006151">
    <property type="entry name" value="Shikm_DH/Glu-tRNA_Rdtase"/>
</dbReference>
<dbReference type="NCBIfam" id="TIGR01035">
    <property type="entry name" value="hemA"/>
    <property type="match status" value="1"/>
</dbReference>
<dbReference type="NCBIfam" id="NF000752">
    <property type="entry name" value="PRK00045.4-2"/>
    <property type="match status" value="1"/>
</dbReference>
<dbReference type="PANTHER" id="PTHR43013">
    <property type="entry name" value="GLUTAMYL-TRNA REDUCTASE"/>
    <property type="match status" value="1"/>
</dbReference>
<dbReference type="PANTHER" id="PTHR43013:SF1">
    <property type="entry name" value="GLUTAMYL-TRNA REDUCTASE"/>
    <property type="match status" value="1"/>
</dbReference>
<dbReference type="Pfam" id="PF00745">
    <property type="entry name" value="GlutR_dimer"/>
    <property type="match status" value="1"/>
</dbReference>
<dbReference type="Pfam" id="PF05201">
    <property type="entry name" value="GlutR_N"/>
    <property type="match status" value="1"/>
</dbReference>
<dbReference type="Pfam" id="PF01488">
    <property type="entry name" value="Shikimate_DH"/>
    <property type="match status" value="1"/>
</dbReference>
<dbReference type="PIRSF" id="PIRSF000445">
    <property type="entry name" value="4pyrrol_synth_GluRdtase"/>
    <property type="match status" value="1"/>
</dbReference>
<dbReference type="SUPFAM" id="SSF69742">
    <property type="entry name" value="Glutamyl tRNA-reductase catalytic, N-terminal domain"/>
    <property type="match status" value="1"/>
</dbReference>
<dbReference type="SUPFAM" id="SSF69075">
    <property type="entry name" value="Glutamyl tRNA-reductase dimerization domain"/>
    <property type="match status" value="1"/>
</dbReference>
<dbReference type="SUPFAM" id="SSF51735">
    <property type="entry name" value="NAD(P)-binding Rossmann-fold domains"/>
    <property type="match status" value="1"/>
</dbReference>
<dbReference type="PROSITE" id="PS00747">
    <property type="entry name" value="GLUTR"/>
    <property type="match status" value="1"/>
</dbReference>
<evidence type="ECO:0000255" key="1">
    <source>
        <dbReference type="HAMAP-Rule" id="MF_00087"/>
    </source>
</evidence>
<accession>Q4JAM9</accession>
<feature type="chain" id="PRO_0000114109" description="Glutamyl-tRNA reductase">
    <location>
        <begin position="1"/>
        <end position="414"/>
    </location>
</feature>
<feature type="active site" description="Nucleophile" evidence="1">
    <location>
        <position position="52"/>
    </location>
</feature>
<feature type="binding site" evidence="1">
    <location>
        <begin position="51"/>
        <end position="54"/>
    </location>
    <ligand>
        <name>substrate</name>
    </ligand>
</feature>
<feature type="binding site" evidence="1">
    <location>
        <position position="107"/>
    </location>
    <ligand>
        <name>substrate</name>
    </ligand>
</feature>
<feature type="binding site" evidence="1">
    <location>
        <begin position="112"/>
        <end position="114"/>
    </location>
    <ligand>
        <name>substrate</name>
    </ligand>
</feature>
<feature type="binding site" evidence="1">
    <location>
        <position position="118"/>
    </location>
    <ligand>
        <name>substrate</name>
    </ligand>
</feature>
<feature type="binding site" evidence="1">
    <location>
        <begin position="187"/>
        <end position="192"/>
    </location>
    <ligand>
        <name>NADP(+)</name>
        <dbReference type="ChEBI" id="CHEBI:58349"/>
    </ligand>
</feature>
<feature type="site" description="Important for activity" evidence="1">
    <location>
        <position position="97"/>
    </location>
</feature>